<gene>
    <name type="primary">Gpx5</name>
</gene>
<accession>P21765</accession>
<accession>E9QK84</accession>
<keyword id="KW-0560">Oxidoreductase</keyword>
<keyword id="KW-0575">Peroxidase</keyword>
<keyword id="KW-1185">Reference proteome</keyword>
<keyword id="KW-0964">Secreted</keyword>
<keyword id="KW-0732">Signal</keyword>
<feature type="signal peptide" evidence="2">
    <location>
        <begin position="1"/>
        <end position="21"/>
    </location>
</feature>
<feature type="chain" id="PRO_0000013078" description="Epididymal secretory glutathione peroxidase">
    <location>
        <begin position="22"/>
        <end position="221"/>
    </location>
</feature>
<feature type="active site" evidence="1">
    <location>
        <position position="73"/>
    </location>
</feature>
<feature type="sequence conflict" description="In Ref. 2; AAA37729." evidence="3" ref="2">
    <original>H</original>
    <variation>D</variation>
    <location>
        <position position="53"/>
    </location>
</feature>
<feature type="sequence conflict" description="In Ref. 2; AAA37729 and 4; CAA37796." evidence="3" ref="2 4">
    <original>A</original>
    <variation>R</variation>
    <location>
        <position position="60"/>
    </location>
</feature>
<feature type="sequence conflict" description="In Ref. 2; AAA37729 and 4; CAA37796." evidence="3" ref="2 4">
    <original>F</original>
    <variation>S</variation>
    <location>
        <position position="170"/>
    </location>
</feature>
<feature type="sequence conflict" description="In Ref. 2; AAA37729 and 4; CAA37796." evidence="3" ref="2 4">
    <original>I</original>
    <variation>V</variation>
    <location>
        <position position="193"/>
    </location>
</feature>
<comment type="function">
    <text>Protects cells and enzymes from oxidative damage, by catalyzing the reduction of hydrogen peroxide, lipid peroxides and organic hydroperoxide, by glutathione. May constitute a glutathione peroxidase-like protective system against peroxide damage in sperm membrane lipids.</text>
</comment>
<comment type="catalytic activity">
    <reaction>
        <text>2 glutathione + H2O2 = glutathione disulfide + 2 H2O</text>
        <dbReference type="Rhea" id="RHEA:16833"/>
        <dbReference type="ChEBI" id="CHEBI:15377"/>
        <dbReference type="ChEBI" id="CHEBI:16240"/>
        <dbReference type="ChEBI" id="CHEBI:57925"/>
        <dbReference type="ChEBI" id="CHEBI:58297"/>
        <dbReference type="EC" id="1.11.1.9"/>
    </reaction>
</comment>
<comment type="subcellular location">
    <subcellularLocation>
        <location>Secreted</location>
    </subcellularLocation>
</comment>
<comment type="tissue specificity">
    <text>Epididymis.</text>
</comment>
<comment type="similarity">
    <text evidence="3">Belongs to the glutathione peroxidase family.</text>
</comment>
<organism>
    <name type="scientific">Mus musculus</name>
    <name type="common">Mouse</name>
    <dbReference type="NCBI Taxonomy" id="10090"/>
    <lineage>
        <taxon>Eukaryota</taxon>
        <taxon>Metazoa</taxon>
        <taxon>Chordata</taxon>
        <taxon>Craniata</taxon>
        <taxon>Vertebrata</taxon>
        <taxon>Euteleostomi</taxon>
        <taxon>Mammalia</taxon>
        <taxon>Eutheria</taxon>
        <taxon>Euarchontoglires</taxon>
        <taxon>Glires</taxon>
        <taxon>Rodentia</taxon>
        <taxon>Myomorpha</taxon>
        <taxon>Muroidea</taxon>
        <taxon>Muridae</taxon>
        <taxon>Murinae</taxon>
        <taxon>Mus</taxon>
        <taxon>Mus</taxon>
    </lineage>
</organism>
<proteinExistence type="evidence at transcript level"/>
<dbReference type="EC" id="1.11.1.9"/>
<dbReference type="EMBL" id="M68896">
    <property type="protein sequence ID" value="AAA37729.1"/>
    <property type="molecule type" value="Genomic_DNA"/>
</dbReference>
<dbReference type="EMBL" id="AC124460">
    <property type="status" value="NOT_ANNOTATED_CDS"/>
    <property type="molecule type" value="Genomic_DNA"/>
</dbReference>
<dbReference type="EMBL" id="X53780">
    <property type="protein sequence ID" value="CAA37796.1"/>
    <property type="molecule type" value="mRNA"/>
</dbReference>
<dbReference type="CCDS" id="CCDS26270.1"/>
<dbReference type="PIR" id="A47367">
    <property type="entry name" value="A47367"/>
</dbReference>
<dbReference type="RefSeq" id="NP_034473.2">
    <property type="nucleotide sequence ID" value="NM_010343.2"/>
</dbReference>
<dbReference type="SMR" id="P21765"/>
<dbReference type="BioGRID" id="200042">
    <property type="interactions" value="1"/>
</dbReference>
<dbReference type="FunCoup" id="P21765">
    <property type="interactions" value="85"/>
</dbReference>
<dbReference type="STRING" id="10090.ENSMUSP00000106117"/>
<dbReference type="PeroxiBase" id="5578">
    <property type="entry name" value="MmGPx05"/>
</dbReference>
<dbReference type="PhosphoSitePlus" id="P21765"/>
<dbReference type="CPTAC" id="non-CPTAC-4037"/>
<dbReference type="jPOST" id="P21765"/>
<dbReference type="PaxDb" id="10090-ENSMUSP00000106117"/>
<dbReference type="ProteomicsDB" id="271052"/>
<dbReference type="DNASU" id="14780"/>
<dbReference type="Ensembl" id="ENSMUST00000110491.9">
    <property type="protein sequence ID" value="ENSMUSP00000106117.3"/>
    <property type="gene ID" value="ENSMUSG00000004344.13"/>
</dbReference>
<dbReference type="GeneID" id="14780"/>
<dbReference type="KEGG" id="mmu:14780"/>
<dbReference type="UCSC" id="uc007ppz.2">
    <property type="organism name" value="mouse"/>
</dbReference>
<dbReference type="AGR" id="MGI:104886"/>
<dbReference type="CTD" id="2880"/>
<dbReference type="MGI" id="MGI:104886">
    <property type="gene designation" value="Gpx5"/>
</dbReference>
<dbReference type="VEuPathDB" id="HostDB:ENSMUSG00000004344"/>
<dbReference type="eggNOG" id="KOG1651">
    <property type="taxonomic scope" value="Eukaryota"/>
</dbReference>
<dbReference type="GeneTree" id="ENSGT00940000161098"/>
<dbReference type="HOGENOM" id="CLU_029507_2_1_1"/>
<dbReference type="InParanoid" id="P21765"/>
<dbReference type="OMA" id="SKHTFWE"/>
<dbReference type="OrthoDB" id="446890at2759"/>
<dbReference type="Reactome" id="R-MMU-3299685">
    <property type="pathway name" value="Detoxification of Reactive Oxygen Species"/>
</dbReference>
<dbReference type="BioGRID-ORCS" id="14780">
    <property type="hits" value="0 hits in 79 CRISPR screens"/>
</dbReference>
<dbReference type="PRO" id="PR:P21765"/>
<dbReference type="Proteomes" id="UP000000589">
    <property type="component" value="Chromosome 13"/>
</dbReference>
<dbReference type="RNAct" id="P21765">
    <property type="molecule type" value="protein"/>
</dbReference>
<dbReference type="Bgee" id="ENSMUSG00000004344">
    <property type="expression patterns" value="Expressed in blastoderm cell in morula and 16 other cell types or tissues"/>
</dbReference>
<dbReference type="GO" id="GO:0005615">
    <property type="term" value="C:extracellular space"/>
    <property type="evidence" value="ECO:0000314"/>
    <property type="project" value="WormBase"/>
</dbReference>
<dbReference type="GO" id="GO:0097524">
    <property type="term" value="C:sperm plasma membrane"/>
    <property type="evidence" value="ECO:0000314"/>
    <property type="project" value="MGI"/>
</dbReference>
<dbReference type="GO" id="GO:0004602">
    <property type="term" value="F:glutathione peroxidase activity"/>
    <property type="evidence" value="ECO:0007669"/>
    <property type="project" value="UniProtKB-EC"/>
</dbReference>
<dbReference type="GO" id="GO:0034599">
    <property type="term" value="P:cellular response to oxidative stress"/>
    <property type="evidence" value="ECO:0000315"/>
    <property type="project" value="MGI"/>
</dbReference>
<dbReference type="CDD" id="cd00340">
    <property type="entry name" value="GSH_Peroxidase"/>
    <property type="match status" value="1"/>
</dbReference>
<dbReference type="FunFam" id="3.40.30.10:FF:000112">
    <property type="entry name" value="Glutathione peroxidase"/>
    <property type="match status" value="1"/>
</dbReference>
<dbReference type="Gene3D" id="3.40.30.10">
    <property type="entry name" value="Glutaredoxin"/>
    <property type="match status" value="1"/>
</dbReference>
<dbReference type="InterPro" id="IPR000889">
    <property type="entry name" value="Glutathione_peroxidase"/>
</dbReference>
<dbReference type="InterPro" id="IPR029759">
    <property type="entry name" value="GPX_AS"/>
</dbReference>
<dbReference type="InterPro" id="IPR029760">
    <property type="entry name" value="GPX_CS"/>
</dbReference>
<dbReference type="InterPro" id="IPR036249">
    <property type="entry name" value="Thioredoxin-like_sf"/>
</dbReference>
<dbReference type="PANTHER" id="PTHR11592:SF127">
    <property type="entry name" value="EPIDIDYMAL SECRETORY GLUTATHIONE PEROXIDASE"/>
    <property type="match status" value="1"/>
</dbReference>
<dbReference type="PANTHER" id="PTHR11592">
    <property type="entry name" value="GLUTATHIONE PEROXIDASE"/>
    <property type="match status" value="1"/>
</dbReference>
<dbReference type="Pfam" id="PF00255">
    <property type="entry name" value="GSHPx"/>
    <property type="match status" value="1"/>
</dbReference>
<dbReference type="PIRSF" id="PIRSF000303">
    <property type="entry name" value="Glutathion_perox"/>
    <property type="match status" value="1"/>
</dbReference>
<dbReference type="PRINTS" id="PR01011">
    <property type="entry name" value="GLUTPROXDASE"/>
</dbReference>
<dbReference type="SUPFAM" id="SSF52833">
    <property type="entry name" value="Thioredoxin-like"/>
    <property type="match status" value="1"/>
</dbReference>
<dbReference type="PROSITE" id="PS00460">
    <property type="entry name" value="GLUTATHIONE_PEROXID_1"/>
    <property type="match status" value="1"/>
</dbReference>
<dbReference type="PROSITE" id="PS00763">
    <property type="entry name" value="GLUTATHIONE_PEROXID_2"/>
    <property type="match status" value="1"/>
</dbReference>
<dbReference type="PROSITE" id="PS51355">
    <property type="entry name" value="GLUTATHIONE_PEROXID_3"/>
    <property type="match status" value="1"/>
</dbReference>
<reference key="1">
    <citation type="journal article" date="1991" name="C. R. Acad. Sci. III, Sci. Vie">
        <title>Androgen-dependent protein secreted by mouse caput epididymis shows high homologies with different glutathione peroxidases.</title>
        <authorList>
            <person name="Ghyselinck N.B."/>
            <person name="Rigaudiere N."/>
            <person name="Dufaure J.-P."/>
        </authorList>
    </citation>
    <scope>NUCLEOTIDE SEQUENCE [GENOMIC DNA]</scope>
    <source>
        <tissue>Epididymis</tissue>
    </source>
</reference>
<reference key="2">
    <citation type="journal article" date="1993" name="Mol. Endocrinol.">
        <title>Structural organization and regulation of the gene for the androgen-dependent glutathione peroxidase-like protein specific to the mouse epididymis.</title>
        <authorList>
            <person name="Ghyselinck N.B."/>
            <person name="Dufaure I."/>
            <person name="Lareyre J.J."/>
            <person name="Rigaudiere N."/>
            <person name="Mattei M.-G."/>
            <person name="Dufaure J.-P."/>
        </authorList>
    </citation>
    <scope>NUCLEOTIDE SEQUENCE [GENOMIC DNA]</scope>
</reference>
<reference key="3">
    <citation type="journal article" date="2009" name="PLoS Biol.">
        <title>Lineage-specific biology revealed by a finished genome assembly of the mouse.</title>
        <authorList>
            <person name="Church D.M."/>
            <person name="Goodstadt L."/>
            <person name="Hillier L.W."/>
            <person name="Zody M.C."/>
            <person name="Goldstein S."/>
            <person name="She X."/>
            <person name="Bult C.J."/>
            <person name="Agarwala R."/>
            <person name="Cherry J.L."/>
            <person name="DiCuccio M."/>
            <person name="Hlavina W."/>
            <person name="Kapustin Y."/>
            <person name="Meric P."/>
            <person name="Maglott D."/>
            <person name="Birtle Z."/>
            <person name="Marques A.C."/>
            <person name="Graves T."/>
            <person name="Zhou S."/>
            <person name="Teague B."/>
            <person name="Potamousis K."/>
            <person name="Churas C."/>
            <person name="Place M."/>
            <person name="Herschleb J."/>
            <person name="Runnheim R."/>
            <person name="Forrest D."/>
            <person name="Amos-Landgraf J."/>
            <person name="Schwartz D.C."/>
            <person name="Cheng Z."/>
            <person name="Lindblad-Toh K."/>
            <person name="Eichler E.E."/>
            <person name="Ponting C.P."/>
        </authorList>
    </citation>
    <scope>NUCLEOTIDE SEQUENCE [LARGE SCALE GENOMIC DNA]</scope>
    <source>
        <strain>C57BL/6J</strain>
    </source>
</reference>
<reference key="4">
    <citation type="journal article" date="1990" name="Nucleic Acids Res.">
        <title>A mouse cDNA sequence for epididymal androgen-regulated proteins related to glutathione peroxidase.</title>
        <authorList>
            <person name="Ghyselinck N.B."/>
            <person name="Dufaure J.-P."/>
        </authorList>
    </citation>
    <scope>NUCLEOTIDE SEQUENCE [MRNA] OF 47-221</scope>
    <source>
        <tissue>Epididymis</tissue>
    </source>
</reference>
<evidence type="ECO:0000250" key="1"/>
<evidence type="ECO:0000255" key="2"/>
<evidence type="ECO:0000305" key="3"/>
<name>GPX5_MOUSE</name>
<protein>
    <recommendedName>
        <fullName>Epididymal secretory glutathione peroxidase</fullName>
        <ecNumber>1.11.1.9</ecNumber>
    </recommendedName>
    <alternativeName>
        <fullName>Epididymis-specific glutathione peroxidase-like protein</fullName>
        <shortName>EGLP</shortName>
    </alternativeName>
    <alternativeName>
        <fullName>Glutathione peroxidase 5</fullName>
        <shortName>GPx-5</shortName>
        <shortName>GSHPx-5</shortName>
    </alternativeName>
    <alternativeName>
        <fullName>Major androgen-regulated protein</fullName>
    </alternativeName>
    <alternativeName>
        <fullName>arMEP24</fullName>
    </alternativeName>
</protein>
<sequence>MVTELRVFYLVPLLLASYVQTTPRPEKMKMDCYKDVKGTIYDYEALSLNGKEHIPFKQYAGKHVLFVNVATYCGLTIQYPELNALQEDLKPFGLVILGFPCNQFGKQEPGDNLEILPGLKYVRPGKGFLPNFQLFAKGDVNGENEQKIFTFLKRSCPHPSETVVMSKHTFWEPIKVHDIRWNFEKFLVGPDGIPVMRWFHQAPVSTVKSDIMAYLSHFKTI</sequence>